<accession>Q9VVV2</accession>
<accession>Q8T0K0</accession>
<organism>
    <name type="scientific">Drosophila melanogaster</name>
    <name type="common">Fruit fly</name>
    <dbReference type="NCBI Taxonomy" id="7227"/>
    <lineage>
        <taxon>Eukaryota</taxon>
        <taxon>Metazoa</taxon>
        <taxon>Ecdysozoa</taxon>
        <taxon>Arthropoda</taxon>
        <taxon>Hexapoda</taxon>
        <taxon>Insecta</taxon>
        <taxon>Pterygota</taxon>
        <taxon>Neoptera</taxon>
        <taxon>Endopterygota</taxon>
        <taxon>Diptera</taxon>
        <taxon>Brachycera</taxon>
        <taxon>Muscomorpha</taxon>
        <taxon>Ephydroidea</taxon>
        <taxon>Drosophilidae</taxon>
        <taxon>Drosophila</taxon>
        <taxon>Sophophora</taxon>
    </lineage>
</organism>
<feature type="chain" id="PRO_0000331551" description="Organic solute transporter alpha-like protein">
    <location>
        <begin position="1"/>
        <end position="328"/>
    </location>
</feature>
<feature type="topological domain" description="Extracellular" evidence="2">
    <location>
        <begin position="1"/>
        <end position="44"/>
    </location>
</feature>
<feature type="transmembrane region" description="Helical" evidence="2">
    <location>
        <begin position="45"/>
        <end position="65"/>
    </location>
</feature>
<feature type="topological domain" description="Cytoplasmic" evidence="2">
    <location>
        <begin position="66"/>
        <end position="84"/>
    </location>
</feature>
<feature type="transmembrane region" description="Helical" evidence="2">
    <location>
        <begin position="85"/>
        <end position="105"/>
    </location>
</feature>
<feature type="topological domain" description="Extracellular" evidence="2">
    <location>
        <position position="106"/>
    </location>
</feature>
<feature type="transmembrane region" description="Helical" evidence="2">
    <location>
        <begin position="107"/>
        <end position="127"/>
    </location>
</feature>
<feature type="topological domain" description="Cytoplasmic" evidence="2">
    <location>
        <begin position="128"/>
        <end position="177"/>
    </location>
</feature>
<feature type="transmembrane region" description="Helical" evidence="2">
    <location>
        <begin position="178"/>
        <end position="198"/>
    </location>
</feature>
<feature type="topological domain" description="Extracellular" evidence="2">
    <location>
        <begin position="199"/>
        <end position="208"/>
    </location>
</feature>
<feature type="transmembrane region" description="Helical" evidence="2">
    <location>
        <begin position="209"/>
        <end position="229"/>
    </location>
</feature>
<feature type="topological domain" description="Cytoplasmic" evidence="2">
    <location>
        <begin position="230"/>
        <end position="247"/>
    </location>
</feature>
<feature type="transmembrane region" description="Helical" evidence="2">
    <location>
        <begin position="248"/>
        <end position="265"/>
    </location>
</feature>
<feature type="topological domain" description="Extracellular" evidence="2">
    <location>
        <begin position="266"/>
        <end position="287"/>
    </location>
</feature>
<feature type="transmembrane region" description="Helical" evidence="2">
    <location>
        <begin position="288"/>
        <end position="308"/>
    </location>
</feature>
<feature type="topological domain" description="Cytoplasmic" evidence="2">
    <location>
        <begin position="309"/>
        <end position="328"/>
    </location>
</feature>
<feature type="glycosylation site" description="N-linked (GlcNAc...) asparagine" evidence="2">
    <location>
        <position position="2"/>
    </location>
</feature>
<feature type="glycosylation site" description="N-linked (GlcNAc...) asparagine" evidence="2">
    <location>
        <position position="15"/>
    </location>
</feature>
<feature type="glycosylation site" description="N-linked (GlcNAc...) asparagine" evidence="2">
    <location>
        <position position="25"/>
    </location>
</feature>
<feature type="glycosylation site" description="N-linked (GlcNAc...) asparagine" evidence="2">
    <location>
        <position position="42"/>
    </location>
</feature>
<feature type="glycosylation site" description="N-linked (GlcNAc...) asparagine" evidence="2">
    <location>
        <position position="280"/>
    </location>
</feature>
<feature type="sequence conflict" description="In Ref. 3; AAL39357." evidence="3" ref="3">
    <original>I</original>
    <variation>T</variation>
    <location>
        <position position="291"/>
    </location>
</feature>
<keyword id="KW-1003">Cell membrane</keyword>
<keyword id="KW-0325">Glycoprotein</keyword>
<keyword id="KW-0472">Membrane</keyword>
<keyword id="KW-1185">Reference proteome</keyword>
<keyword id="KW-0812">Transmembrane</keyword>
<keyword id="KW-1133">Transmembrane helix</keyword>
<keyword id="KW-0813">Transport</keyword>
<comment type="function">
    <text evidence="1">Probable transporter.</text>
</comment>
<comment type="subcellular location">
    <subcellularLocation>
        <location evidence="1">Cell membrane</location>
        <topology evidence="1">Multi-pass membrane protein</topology>
    </subcellularLocation>
</comment>
<comment type="similarity">
    <text evidence="3">Belongs to the OST-alpha family.</text>
</comment>
<name>OSTA_DROME</name>
<evidence type="ECO:0000250" key="1"/>
<evidence type="ECO:0000255" key="2"/>
<evidence type="ECO:0000305" key="3"/>
<protein>
    <recommendedName>
        <fullName>Organic solute transporter alpha-like protein</fullName>
    </recommendedName>
    <alternativeName>
        <fullName>Solute carrier family 51 subunit alpha homolog</fullName>
    </alternativeName>
</protein>
<proteinExistence type="evidence at transcript level"/>
<gene>
    <name type="ORF">CG6836</name>
</gene>
<reference key="1">
    <citation type="journal article" date="2000" name="Science">
        <title>The genome sequence of Drosophila melanogaster.</title>
        <authorList>
            <person name="Adams M.D."/>
            <person name="Celniker S.E."/>
            <person name="Holt R.A."/>
            <person name="Evans C.A."/>
            <person name="Gocayne J.D."/>
            <person name="Amanatides P.G."/>
            <person name="Scherer S.E."/>
            <person name="Li P.W."/>
            <person name="Hoskins R.A."/>
            <person name="Galle R.F."/>
            <person name="George R.A."/>
            <person name="Lewis S.E."/>
            <person name="Richards S."/>
            <person name="Ashburner M."/>
            <person name="Henderson S.N."/>
            <person name="Sutton G.G."/>
            <person name="Wortman J.R."/>
            <person name="Yandell M.D."/>
            <person name="Zhang Q."/>
            <person name="Chen L.X."/>
            <person name="Brandon R.C."/>
            <person name="Rogers Y.-H.C."/>
            <person name="Blazej R.G."/>
            <person name="Champe M."/>
            <person name="Pfeiffer B.D."/>
            <person name="Wan K.H."/>
            <person name="Doyle C."/>
            <person name="Baxter E.G."/>
            <person name="Helt G."/>
            <person name="Nelson C.R."/>
            <person name="Miklos G.L.G."/>
            <person name="Abril J.F."/>
            <person name="Agbayani A."/>
            <person name="An H.-J."/>
            <person name="Andrews-Pfannkoch C."/>
            <person name="Baldwin D."/>
            <person name="Ballew R.M."/>
            <person name="Basu A."/>
            <person name="Baxendale J."/>
            <person name="Bayraktaroglu L."/>
            <person name="Beasley E.M."/>
            <person name="Beeson K.Y."/>
            <person name="Benos P.V."/>
            <person name="Berman B.P."/>
            <person name="Bhandari D."/>
            <person name="Bolshakov S."/>
            <person name="Borkova D."/>
            <person name="Botchan M.R."/>
            <person name="Bouck J."/>
            <person name="Brokstein P."/>
            <person name="Brottier P."/>
            <person name="Burtis K.C."/>
            <person name="Busam D.A."/>
            <person name="Butler H."/>
            <person name="Cadieu E."/>
            <person name="Center A."/>
            <person name="Chandra I."/>
            <person name="Cherry J.M."/>
            <person name="Cawley S."/>
            <person name="Dahlke C."/>
            <person name="Davenport L.B."/>
            <person name="Davies P."/>
            <person name="de Pablos B."/>
            <person name="Delcher A."/>
            <person name="Deng Z."/>
            <person name="Mays A.D."/>
            <person name="Dew I."/>
            <person name="Dietz S.M."/>
            <person name="Dodson K."/>
            <person name="Doup L.E."/>
            <person name="Downes M."/>
            <person name="Dugan-Rocha S."/>
            <person name="Dunkov B.C."/>
            <person name="Dunn P."/>
            <person name="Durbin K.J."/>
            <person name="Evangelista C.C."/>
            <person name="Ferraz C."/>
            <person name="Ferriera S."/>
            <person name="Fleischmann W."/>
            <person name="Fosler C."/>
            <person name="Gabrielian A.E."/>
            <person name="Garg N.S."/>
            <person name="Gelbart W.M."/>
            <person name="Glasser K."/>
            <person name="Glodek A."/>
            <person name="Gong F."/>
            <person name="Gorrell J.H."/>
            <person name="Gu Z."/>
            <person name="Guan P."/>
            <person name="Harris M."/>
            <person name="Harris N.L."/>
            <person name="Harvey D.A."/>
            <person name="Heiman T.J."/>
            <person name="Hernandez J.R."/>
            <person name="Houck J."/>
            <person name="Hostin D."/>
            <person name="Houston K.A."/>
            <person name="Howland T.J."/>
            <person name="Wei M.-H."/>
            <person name="Ibegwam C."/>
            <person name="Jalali M."/>
            <person name="Kalush F."/>
            <person name="Karpen G.H."/>
            <person name="Ke Z."/>
            <person name="Kennison J.A."/>
            <person name="Ketchum K.A."/>
            <person name="Kimmel B.E."/>
            <person name="Kodira C.D."/>
            <person name="Kraft C.L."/>
            <person name="Kravitz S."/>
            <person name="Kulp D."/>
            <person name="Lai Z."/>
            <person name="Lasko P."/>
            <person name="Lei Y."/>
            <person name="Levitsky A.A."/>
            <person name="Li J.H."/>
            <person name="Li Z."/>
            <person name="Liang Y."/>
            <person name="Lin X."/>
            <person name="Liu X."/>
            <person name="Mattei B."/>
            <person name="McIntosh T.C."/>
            <person name="McLeod M.P."/>
            <person name="McPherson D."/>
            <person name="Merkulov G."/>
            <person name="Milshina N.V."/>
            <person name="Mobarry C."/>
            <person name="Morris J."/>
            <person name="Moshrefi A."/>
            <person name="Mount S.M."/>
            <person name="Moy M."/>
            <person name="Murphy B."/>
            <person name="Murphy L."/>
            <person name="Muzny D.M."/>
            <person name="Nelson D.L."/>
            <person name="Nelson D.R."/>
            <person name="Nelson K.A."/>
            <person name="Nixon K."/>
            <person name="Nusskern D.R."/>
            <person name="Pacleb J.M."/>
            <person name="Palazzolo M."/>
            <person name="Pittman G.S."/>
            <person name="Pan S."/>
            <person name="Pollard J."/>
            <person name="Puri V."/>
            <person name="Reese M.G."/>
            <person name="Reinert K."/>
            <person name="Remington K."/>
            <person name="Saunders R.D.C."/>
            <person name="Scheeler F."/>
            <person name="Shen H."/>
            <person name="Shue B.C."/>
            <person name="Siden-Kiamos I."/>
            <person name="Simpson M."/>
            <person name="Skupski M.P."/>
            <person name="Smith T.J."/>
            <person name="Spier E."/>
            <person name="Spradling A.C."/>
            <person name="Stapleton M."/>
            <person name="Strong R."/>
            <person name="Sun E."/>
            <person name="Svirskas R."/>
            <person name="Tector C."/>
            <person name="Turner R."/>
            <person name="Venter E."/>
            <person name="Wang A.H."/>
            <person name="Wang X."/>
            <person name="Wang Z.-Y."/>
            <person name="Wassarman D.A."/>
            <person name="Weinstock G.M."/>
            <person name="Weissenbach J."/>
            <person name="Williams S.M."/>
            <person name="Woodage T."/>
            <person name="Worley K.C."/>
            <person name="Wu D."/>
            <person name="Yang S."/>
            <person name="Yao Q.A."/>
            <person name="Ye J."/>
            <person name="Yeh R.-F."/>
            <person name="Zaveri J.S."/>
            <person name="Zhan M."/>
            <person name="Zhang G."/>
            <person name="Zhao Q."/>
            <person name="Zheng L."/>
            <person name="Zheng X.H."/>
            <person name="Zhong F.N."/>
            <person name="Zhong W."/>
            <person name="Zhou X."/>
            <person name="Zhu S.C."/>
            <person name="Zhu X."/>
            <person name="Smith H.O."/>
            <person name="Gibbs R.A."/>
            <person name="Myers E.W."/>
            <person name="Rubin G.M."/>
            <person name="Venter J.C."/>
        </authorList>
    </citation>
    <scope>NUCLEOTIDE SEQUENCE [LARGE SCALE GENOMIC DNA]</scope>
    <source>
        <strain>Berkeley</strain>
    </source>
</reference>
<reference key="2">
    <citation type="journal article" date="2002" name="Genome Biol.">
        <title>Annotation of the Drosophila melanogaster euchromatic genome: a systematic review.</title>
        <authorList>
            <person name="Misra S."/>
            <person name="Crosby M.A."/>
            <person name="Mungall C.J."/>
            <person name="Matthews B.B."/>
            <person name="Campbell K.S."/>
            <person name="Hradecky P."/>
            <person name="Huang Y."/>
            <person name="Kaminker J.S."/>
            <person name="Millburn G.H."/>
            <person name="Prochnik S.E."/>
            <person name="Smith C.D."/>
            <person name="Tupy J.L."/>
            <person name="Whitfield E.J."/>
            <person name="Bayraktaroglu L."/>
            <person name="Berman B.P."/>
            <person name="Bettencourt B.R."/>
            <person name="Celniker S.E."/>
            <person name="de Grey A.D.N.J."/>
            <person name="Drysdale R.A."/>
            <person name="Harris N.L."/>
            <person name="Richter J."/>
            <person name="Russo S."/>
            <person name="Schroeder A.J."/>
            <person name="Shu S.Q."/>
            <person name="Stapleton M."/>
            <person name="Yamada C."/>
            <person name="Ashburner M."/>
            <person name="Gelbart W.M."/>
            <person name="Rubin G.M."/>
            <person name="Lewis S.E."/>
        </authorList>
    </citation>
    <scope>GENOME REANNOTATION</scope>
    <source>
        <strain>Berkeley</strain>
    </source>
</reference>
<reference key="3">
    <citation type="journal article" date="2002" name="Genome Biol.">
        <title>A Drosophila full-length cDNA resource.</title>
        <authorList>
            <person name="Stapleton M."/>
            <person name="Carlson J.W."/>
            <person name="Brokstein P."/>
            <person name="Yu C."/>
            <person name="Champe M."/>
            <person name="George R.A."/>
            <person name="Guarin H."/>
            <person name="Kronmiller B."/>
            <person name="Pacleb J.M."/>
            <person name="Park S."/>
            <person name="Wan K.H."/>
            <person name="Rubin G.M."/>
            <person name="Celniker S.E."/>
        </authorList>
    </citation>
    <scope>NUCLEOTIDE SEQUENCE [LARGE SCALE MRNA]</scope>
    <source>
        <strain>Berkeley</strain>
        <tissue>Head</tissue>
    </source>
</reference>
<dbReference type="EMBL" id="AE014296">
    <property type="protein sequence ID" value="AAF49205.1"/>
    <property type="molecule type" value="Genomic_DNA"/>
</dbReference>
<dbReference type="EMBL" id="AY069212">
    <property type="protein sequence ID" value="AAL39357.1"/>
    <property type="molecule type" value="mRNA"/>
</dbReference>
<dbReference type="RefSeq" id="NP_649079.2">
    <property type="nucleotide sequence ID" value="NM_140822.3"/>
</dbReference>
<dbReference type="BioGRID" id="65350">
    <property type="interactions" value="2"/>
</dbReference>
<dbReference type="FunCoup" id="Q9VVV2">
    <property type="interactions" value="37"/>
</dbReference>
<dbReference type="IntAct" id="Q9VVV2">
    <property type="interactions" value="2"/>
</dbReference>
<dbReference type="STRING" id="7227.FBpp0074790"/>
<dbReference type="GlyGen" id="Q9VVV2">
    <property type="glycosylation" value="5 sites"/>
</dbReference>
<dbReference type="PaxDb" id="7227-FBpp0074790"/>
<dbReference type="DNASU" id="40070"/>
<dbReference type="EnsemblMetazoa" id="FBtr0075023">
    <property type="protein sequence ID" value="FBpp0074790"/>
    <property type="gene ID" value="FBgn0036834"/>
</dbReference>
<dbReference type="GeneID" id="40070"/>
<dbReference type="KEGG" id="dme:Dmel_CG6836"/>
<dbReference type="UCSC" id="CG6836-RA">
    <property type="organism name" value="d. melanogaster"/>
</dbReference>
<dbReference type="AGR" id="FB:FBgn0036834"/>
<dbReference type="FlyBase" id="FBgn0036834">
    <property type="gene designation" value="CG6836"/>
</dbReference>
<dbReference type="VEuPathDB" id="VectorBase:FBgn0036834"/>
<dbReference type="eggNOG" id="KOG2641">
    <property type="taxonomic scope" value="Eukaryota"/>
</dbReference>
<dbReference type="HOGENOM" id="CLU_063543_0_0_1"/>
<dbReference type="InParanoid" id="Q9VVV2"/>
<dbReference type="OMA" id="CLPMVIP"/>
<dbReference type="OrthoDB" id="5832279at2759"/>
<dbReference type="PhylomeDB" id="Q9VVV2"/>
<dbReference type="BioGRID-ORCS" id="40070">
    <property type="hits" value="0 hits in 1 CRISPR screen"/>
</dbReference>
<dbReference type="GenomeRNAi" id="40070"/>
<dbReference type="PRO" id="PR:Q9VVV2"/>
<dbReference type="Proteomes" id="UP000000803">
    <property type="component" value="Chromosome 3L"/>
</dbReference>
<dbReference type="Bgee" id="FBgn0036834">
    <property type="expression patterns" value="Expressed in thoracico-abdominal ganglion (Drosophila) and 70 other cell types or tissues"/>
</dbReference>
<dbReference type="ExpressionAtlas" id="Q9VVV2">
    <property type="expression patterns" value="baseline and differential"/>
</dbReference>
<dbReference type="GO" id="GO:0016020">
    <property type="term" value="C:membrane"/>
    <property type="evidence" value="ECO:0000250"/>
    <property type="project" value="UniProtKB"/>
</dbReference>
<dbReference type="GO" id="GO:0005886">
    <property type="term" value="C:plasma membrane"/>
    <property type="evidence" value="ECO:0007669"/>
    <property type="project" value="UniProtKB-SubCell"/>
</dbReference>
<dbReference type="InterPro" id="IPR005178">
    <property type="entry name" value="Ostalpha/TMEM184C"/>
</dbReference>
<dbReference type="PANTHER" id="PTHR23423">
    <property type="entry name" value="ORGANIC SOLUTE TRANSPORTER-RELATED"/>
    <property type="match status" value="1"/>
</dbReference>
<dbReference type="Pfam" id="PF03619">
    <property type="entry name" value="Solute_trans_a"/>
    <property type="match status" value="1"/>
</dbReference>
<dbReference type="SMART" id="SM01417">
    <property type="entry name" value="Solute_trans_a"/>
    <property type="match status" value="1"/>
</dbReference>
<sequence>MNASENYFTMDPTENISQVLDQNRNNTNSLRTHPTVEEYYENMTAFLSLAIFIASLLTILNISIFATTVSRLRRHLDKPLLGPSIMMVGLYPIISVAALVTILVPYSWFICHTVMHVMFMVGGPVFRTLLFRYVGSEQNYVKETAGEAVQLNTPPCCCCCLCLPMVIPTKAKLCISRYMVWQMPFWQGSIMLVMNILYYRDIQLYRQVMFFFIPFIVCSIVLGAWSLQITVRMITKVRGDYQLRKKMFCLQLVVMLCKLQYLVLYDQLDGIKMGGEYPINHTVYKQTIINILILVEMVLVSMMVQSAYRTPVQVQIDEVNKEKEVTRI</sequence>